<dbReference type="EMBL" id="AP005672">
    <property type="protein sequence ID" value="BAC85020.1"/>
    <property type="molecule type" value="Genomic_DNA"/>
</dbReference>
<dbReference type="RefSeq" id="NP_904171.1">
    <property type="nucleotide sequence ID" value="NC_005087.2"/>
</dbReference>
<dbReference type="RefSeq" id="YP_009477502.1">
    <property type="nucleotide sequence ID" value="NC_037465.1"/>
</dbReference>
<dbReference type="SMR" id="Q6YXN2"/>
<dbReference type="FunCoup" id="Q6YXN2">
    <property type="interactions" value="545"/>
</dbReference>
<dbReference type="STRING" id="3218.Q6YXN2"/>
<dbReference type="PaxDb" id="3218-PP1S27_267V6.1"/>
<dbReference type="GeneID" id="2546708"/>
<dbReference type="GeneID" id="36487115"/>
<dbReference type="KEGG" id="ppp:2546708"/>
<dbReference type="eggNOG" id="KOG4663">
    <property type="taxonomic scope" value="Eukaryota"/>
</dbReference>
<dbReference type="HOGENOM" id="CLU_150965_0_0_1"/>
<dbReference type="InParanoid" id="Q6YXN2"/>
<dbReference type="OrthoDB" id="1663482at2759"/>
<dbReference type="Proteomes" id="UP000006727">
    <property type="component" value="Chloroplast"/>
</dbReference>
<dbReference type="GO" id="GO:0009535">
    <property type="term" value="C:chloroplast thylakoid membrane"/>
    <property type="evidence" value="ECO:0007669"/>
    <property type="project" value="UniProtKB-SubCell"/>
</dbReference>
<dbReference type="GO" id="GO:0016020">
    <property type="term" value="C:membrane"/>
    <property type="evidence" value="ECO:0000318"/>
    <property type="project" value="GO_Central"/>
</dbReference>
<dbReference type="GO" id="GO:0045158">
    <property type="term" value="F:electron transporter, transferring electrons within cytochrome b6/f complex of photosystem II activity"/>
    <property type="evidence" value="ECO:0007669"/>
    <property type="project" value="UniProtKB-UniRule"/>
</dbReference>
<dbReference type="GO" id="GO:0046872">
    <property type="term" value="F:metal ion binding"/>
    <property type="evidence" value="ECO:0007669"/>
    <property type="project" value="UniProtKB-KW"/>
</dbReference>
<dbReference type="GO" id="GO:0016491">
    <property type="term" value="F:oxidoreductase activity"/>
    <property type="evidence" value="ECO:0007669"/>
    <property type="project" value="InterPro"/>
</dbReference>
<dbReference type="GO" id="GO:0015979">
    <property type="term" value="P:photosynthesis"/>
    <property type="evidence" value="ECO:0007669"/>
    <property type="project" value="UniProtKB-UniRule"/>
</dbReference>
<dbReference type="GO" id="GO:0022904">
    <property type="term" value="P:respiratory electron transport chain"/>
    <property type="evidence" value="ECO:0007669"/>
    <property type="project" value="InterPro"/>
</dbReference>
<dbReference type="CDD" id="cd00284">
    <property type="entry name" value="Cytochrome_b_N"/>
    <property type="match status" value="1"/>
</dbReference>
<dbReference type="FunFam" id="1.20.810.10:FF:000001">
    <property type="entry name" value="Cytochrome b6"/>
    <property type="match status" value="1"/>
</dbReference>
<dbReference type="Gene3D" id="1.20.810.10">
    <property type="entry name" value="Cytochrome Bc1 Complex, Chain C"/>
    <property type="match status" value="1"/>
</dbReference>
<dbReference type="HAMAP" id="MF_00633">
    <property type="entry name" value="Cytb6_f_cytb6"/>
    <property type="match status" value="1"/>
</dbReference>
<dbReference type="InterPro" id="IPR005797">
    <property type="entry name" value="Cyt_b/b6_N"/>
</dbReference>
<dbReference type="InterPro" id="IPR023530">
    <property type="entry name" value="Cyt_B6_PetB"/>
</dbReference>
<dbReference type="InterPro" id="IPR027387">
    <property type="entry name" value="Cytb/b6-like_sf"/>
</dbReference>
<dbReference type="InterPro" id="IPR048259">
    <property type="entry name" value="Cytochrome_b_N_euk/bac"/>
</dbReference>
<dbReference type="InterPro" id="IPR016174">
    <property type="entry name" value="Di-haem_cyt_TM"/>
</dbReference>
<dbReference type="NCBIfam" id="NF002990">
    <property type="entry name" value="PRK03735.1"/>
    <property type="match status" value="1"/>
</dbReference>
<dbReference type="PANTHER" id="PTHR19271">
    <property type="entry name" value="CYTOCHROME B"/>
    <property type="match status" value="1"/>
</dbReference>
<dbReference type="PANTHER" id="PTHR19271:SF16">
    <property type="entry name" value="CYTOCHROME B"/>
    <property type="match status" value="1"/>
</dbReference>
<dbReference type="Pfam" id="PF00033">
    <property type="entry name" value="Cytochrome_B"/>
    <property type="match status" value="1"/>
</dbReference>
<dbReference type="PIRSF" id="PIRSF000032">
    <property type="entry name" value="Cytochrome_b6"/>
    <property type="match status" value="1"/>
</dbReference>
<dbReference type="SUPFAM" id="SSF81342">
    <property type="entry name" value="Transmembrane di-heme cytochromes"/>
    <property type="match status" value="1"/>
</dbReference>
<dbReference type="PROSITE" id="PS51002">
    <property type="entry name" value="CYTB_NTER"/>
    <property type="match status" value="1"/>
</dbReference>
<evidence type="ECO:0000255" key="1">
    <source>
        <dbReference type="HAMAP-Rule" id="MF_00633"/>
    </source>
</evidence>
<organism>
    <name type="scientific">Physcomitrium patens</name>
    <name type="common">Spreading-leaved earth moss</name>
    <name type="synonym">Physcomitrella patens</name>
    <dbReference type="NCBI Taxonomy" id="3218"/>
    <lineage>
        <taxon>Eukaryota</taxon>
        <taxon>Viridiplantae</taxon>
        <taxon>Streptophyta</taxon>
        <taxon>Embryophyta</taxon>
        <taxon>Bryophyta</taxon>
        <taxon>Bryophytina</taxon>
        <taxon>Bryopsida</taxon>
        <taxon>Funariidae</taxon>
        <taxon>Funariales</taxon>
        <taxon>Funariaceae</taxon>
        <taxon>Physcomitrium</taxon>
    </lineage>
</organism>
<proteinExistence type="inferred from homology"/>
<keyword id="KW-0150">Chloroplast</keyword>
<keyword id="KW-0249">Electron transport</keyword>
<keyword id="KW-0349">Heme</keyword>
<keyword id="KW-0408">Iron</keyword>
<keyword id="KW-0472">Membrane</keyword>
<keyword id="KW-0479">Metal-binding</keyword>
<keyword id="KW-0602">Photosynthesis</keyword>
<keyword id="KW-0934">Plastid</keyword>
<keyword id="KW-1185">Reference proteome</keyword>
<keyword id="KW-0793">Thylakoid</keyword>
<keyword id="KW-0812">Transmembrane</keyword>
<keyword id="KW-1133">Transmembrane helix</keyword>
<keyword id="KW-0813">Transport</keyword>
<gene>
    <name evidence="1" type="primary">petB</name>
</gene>
<sequence>MGRVYDWFEERLEIQAIADDITSKYVPPHVNIFYCLGGITLTCFLVQVATGFAMTFYYRPTVTEAFASVQYIMTEVNFGWLIRSVHRWSASMMVLMMILHIFRVYLTGGFKKPRELTWVTGVILAVLTVSFGVTGYSLPWDQIGYWAVKIVTGVPEAIPVIGSPLVEILRGSVSVGQSTLTRFYSLHTFVLPLLTAVFMLMHFLMIRKQGISGPL</sequence>
<accession>Q6YXN2</accession>
<geneLocation type="chloroplast"/>
<protein>
    <recommendedName>
        <fullName evidence="1">Cytochrome b6</fullName>
    </recommendedName>
</protein>
<name>CYB6_PHYPA</name>
<feature type="chain" id="PRO_0000061812" description="Cytochrome b6">
    <location>
        <begin position="1"/>
        <end position="215"/>
    </location>
</feature>
<feature type="transmembrane region" description="Helical" evidence="1">
    <location>
        <begin position="32"/>
        <end position="52"/>
    </location>
</feature>
<feature type="transmembrane region" description="Helical" evidence="1">
    <location>
        <begin position="90"/>
        <end position="110"/>
    </location>
</feature>
<feature type="transmembrane region" description="Helical" evidence="1">
    <location>
        <begin position="116"/>
        <end position="136"/>
    </location>
</feature>
<feature type="transmembrane region" description="Helical" evidence="1">
    <location>
        <begin position="186"/>
        <end position="206"/>
    </location>
</feature>
<feature type="binding site" description="covalent" evidence="1">
    <location>
        <position position="35"/>
    </location>
    <ligand>
        <name>heme c</name>
        <dbReference type="ChEBI" id="CHEBI:61717"/>
    </ligand>
</feature>
<feature type="binding site" description="axial binding residue" evidence="1">
    <location>
        <position position="86"/>
    </location>
    <ligand>
        <name>heme b</name>
        <dbReference type="ChEBI" id="CHEBI:60344"/>
        <label>2</label>
    </ligand>
    <ligandPart>
        <name>Fe</name>
        <dbReference type="ChEBI" id="CHEBI:18248"/>
    </ligandPart>
</feature>
<feature type="binding site" description="axial binding residue" evidence="1">
    <location>
        <position position="100"/>
    </location>
    <ligand>
        <name>heme b</name>
        <dbReference type="ChEBI" id="CHEBI:60344"/>
        <label>1</label>
    </ligand>
    <ligandPart>
        <name>Fe</name>
        <dbReference type="ChEBI" id="CHEBI:18248"/>
    </ligandPart>
</feature>
<feature type="binding site" description="axial binding residue" evidence="1">
    <location>
        <position position="187"/>
    </location>
    <ligand>
        <name>heme b</name>
        <dbReference type="ChEBI" id="CHEBI:60344"/>
        <label>2</label>
    </ligand>
    <ligandPart>
        <name>Fe</name>
        <dbReference type="ChEBI" id="CHEBI:18248"/>
    </ligandPart>
</feature>
<feature type="binding site" description="axial binding residue" evidence="1">
    <location>
        <position position="202"/>
    </location>
    <ligand>
        <name>heme b</name>
        <dbReference type="ChEBI" id="CHEBI:60344"/>
        <label>1</label>
    </ligand>
    <ligandPart>
        <name>Fe</name>
        <dbReference type="ChEBI" id="CHEBI:18248"/>
    </ligandPart>
</feature>
<reference key="1">
    <citation type="journal article" date="2003" name="Nucleic Acids Res.">
        <title>Complete chloroplast DNA sequence of the moss Physcomitrella patens: evidence for the loss and relocation of rpoA from the chloroplast to the nucleus.</title>
        <authorList>
            <person name="Sugiura C."/>
            <person name="Kobayashi Y."/>
            <person name="Setsuyuki A."/>
            <person name="Sugita C."/>
            <person name="Sugita M."/>
        </authorList>
    </citation>
    <scope>NUCLEOTIDE SEQUENCE [LARGE SCALE GENOMIC DNA]</scope>
    <source>
        <strain>cv. Gransden 2004</strain>
    </source>
</reference>
<comment type="function">
    <text evidence="1">Component of the cytochrome b6-f complex, which mediates electron transfer between photosystem II (PSII) and photosystem I (PSI), cyclic electron flow around PSI, and state transitions.</text>
</comment>
<comment type="cofactor">
    <cofactor evidence="1">
        <name>heme b</name>
        <dbReference type="ChEBI" id="CHEBI:60344"/>
    </cofactor>
    <text evidence="1">Binds 2 heme b groups non-covalently with two histidine residues as axial ligands.</text>
</comment>
<comment type="cofactor">
    <cofactor evidence="1">
        <name>heme c</name>
        <dbReference type="ChEBI" id="CHEBI:61717"/>
    </cofactor>
    <text evidence="1">Binds one heme group covalently by a single cysteine link with no axial amino acid ligand. This heme was named heme ci.</text>
</comment>
<comment type="subunit">
    <text evidence="1">The 4 large subunits of the cytochrome b6-f complex are cytochrome b6, subunit IV (17 kDa polypeptide, PetD), cytochrome f and the Rieske protein, while the 4 small subunits are PetG, PetL, PetM and PetN. The complex functions as a dimer.</text>
</comment>
<comment type="subcellular location">
    <subcellularLocation>
        <location evidence="1">Plastid</location>
        <location evidence="1">Chloroplast thylakoid membrane</location>
        <topology evidence="1">Multi-pass membrane protein</topology>
    </subcellularLocation>
</comment>
<comment type="miscellaneous">
    <text evidence="1">Heme 1 (or BH or b566) is high-potential and absorbs at about 566 nm, and heme 2 (or BL or b562) is low-potential and absorbs at about 562 nm.</text>
</comment>
<comment type="similarity">
    <text evidence="1">Belongs to the cytochrome b family. PetB subfamily.</text>
</comment>